<protein>
    <recommendedName>
        <fullName evidence="1">ATP-dependent Clp protease ATP-binding subunit ClpX</fullName>
    </recommendedName>
</protein>
<evidence type="ECO:0000255" key="1">
    <source>
        <dbReference type="HAMAP-Rule" id="MF_00175"/>
    </source>
</evidence>
<evidence type="ECO:0000255" key="2">
    <source>
        <dbReference type="PROSITE-ProRule" id="PRU01250"/>
    </source>
</evidence>
<organism>
    <name type="scientific">Aromatoleum aromaticum (strain DSM 19018 / LMG 30748 / EbN1)</name>
    <name type="common">Azoarcus sp. (strain EbN1)</name>
    <dbReference type="NCBI Taxonomy" id="76114"/>
    <lineage>
        <taxon>Bacteria</taxon>
        <taxon>Pseudomonadati</taxon>
        <taxon>Pseudomonadota</taxon>
        <taxon>Betaproteobacteria</taxon>
        <taxon>Rhodocyclales</taxon>
        <taxon>Rhodocyclaceae</taxon>
        <taxon>Aromatoleum</taxon>
    </lineage>
</organism>
<dbReference type="EMBL" id="CR555306">
    <property type="protein sequence ID" value="CAI08954.1"/>
    <property type="molecule type" value="Genomic_DNA"/>
</dbReference>
<dbReference type="RefSeq" id="WP_011238635.1">
    <property type="nucleotide sequence ID" value="NC_006513.1"/>
</dbReference>
<dbReference type="SMR" id="Q5P160"/>
<dbReference type="STRING" id="76114.ebA4971"/>
<dbReference type="KEGG" id="eba:ebA4971"/>
<dbReference type="eggNOG" id="COG1219">
    <property type="taxonomic scope" value="Bacteria"/>
</dbReference>
<dbReference type="HOGENOM" id="CLU_014218_8_2_4"/>
<dbReference type="OrthoDB" id="9804062at2"/>
<dbReference type="Proteomes" id="UP000006552">
    <property type="component" value="Chromosome"/>
</dbReference>
<dbReference type="GO" id="GO:0009376">
    <property type="term" value="C:HslUV protease complex"/>
    <property type="evidence" value="ECO:0007669"/>
    <property type="project" value="TreeGrafter"/>
</dbReference>
<dbReference type="GO" id="GO:0005524">
    <property type="term" value="F:ATP binding"/>
    <property type="evidence" value="ECO:0007669"/>
    <property type="project" value="UniProtKB-UniRule"/>
</dbReference>
<dbReference type="GO" id="GO:0016887">
    <property type="term" value="F:ATP hydrolysis activity"/>
    <property type="evidence" value="ECO:0007669"/>
    <property type="project" value="InterPro"/>
</dbReference>
<dbReference type="GO" id="GO:0140662">
    <property type="term" value="F:ATP-dependent protein folding chaperone"/>
    <property type="evidence" value="ECO:0007669"/>
    <property type="project" value="InterPro"/>
</dbReference>
<dbReference type="GO" id="GO:0046983">
    <property type="term" value="F:protein dimerization activity"/>
    <property type="evidence" value="ECO:0007669"/>
    <property type="project" value="InterPro"/>
</dbReference>
<dbReference type="GO" id="GO:0051082">
    <property type="term" value="F:unfolded protein binding"/>
    <property type="evidence" value="ECO:0007669"/>
    <property type="project" value="UniProtKB-UniRule"/>
</dbReference>
<dbReference type="GO" id="GO:0008270">
    <property type="term" value="F:zinc ion binding"/>
    <property type="evidence" value="ECO:0007669"/>
    <property type="project" value="InterPro"/>
</dbReference>
<dbReference type="GO" id="GO:0051301">
    <property type="term" value="P:cell division"/>
    <property type="evidence" value="ECO:0007669"/>
    <property type="project" value="TreeGrafter"/>
</dbReference>
<dbReference type="GO" id="GO:0051603">
    <property type="term" value="P:proteolysis involved in protein catabolic process"/>
    <property type="evidence" value="ECO:0007669"/>
    <property type="project" value="TreeGrafter"/>
</dbReference>
<dbReference type="CDD" id="cd19497">
    <property type="entry name" value="RecA-like_ClpX"/>
    <property type="match status" value="1"/>
</dbReference>
<dbReference type="FunFam" id="1.10.8.60:FF:000002">
    <property type="entry name" value="ATP-dependent Clp protease ATP-binding subunit ClpX"/>
    <property type="match status" value="1"/>
</dbReference>
<dbReference type="FunFam" id="3.40.50.300:FF:000005">
    <property type="entry name" value="ATP-dependent Clp protease ATP-binding subunit ClpX"/>
    <property type="match status" value="1"/>
</dbReference>
<dbReference type="Gene3D" id="1.10.8.60">
    <property type="match status" value="1"/>
</dbReference>
<dbReference type="Gene3D" id="6.20.220.10">
    <property type="entry name" value="ClpX chaperone, C4-type zinc finger domain"/>
    <property type="match status" value="1"/>
</dbReference>
<dbReference type="Gene3D" id="3.40.50.300">
    <property type="entry name" value="P-loop containing nucleotide triphosphate hydrolases"/>
    <property type="match status" value="1"/>
</dbReference>
<dbReference type="HAMAP" id="MF_00175">
    <property type="entry name" value="ClpX"/>
    <property type="match status" value="1"/>
</dbReference>
<dbReference type="InterPro" id="IPR003593">
    <property type="entry name" value="AAA+_ATPase"/>
</dbReference>
<dbReference type="InterPro" id="IPR050052">
    <property type="entry name" value="ATP-dep_Clp_protease_ClpX"/>
</dbReference>
<dbReference type="InterPro" id="IPR003959">
    <property type="entry name" value="ATPase_AAA_core"/>
</dbReference>
<dbReference type="InterPro" id="IPR019489">
    <property type="entry name" value="Clp_ATPase_C"/>
</dbReference>
<dbReference type="InterPro" id="IPR004487">
    <property type="entry name" value="Clp_protease_ATP-bd_su_ClpX"/>
</dbReference>
<dbReference type="InterPro" id="IPR046425">
    <property type="entry name" value="ClpX_bact"/>
</dbReference>
<dbReference type="InterPro" id="IPR027417">
    <property type="entry name" value="P-loop_NTPase"/>
</dbReference>
<dbReference type="InterPro" id="IPR010603">
    <property type="entry name" value="Znf_CppX_C4"/>
</dbReference>
<dbReference type="InterPro" id="IPR038366">
    <property type="entry name" value="Znf_CppX_C4_sf"/>
</dbReference>
<dbReference type="NCBIfam" id="TIGR00382">
    <property type="entry name" value="clpX"/>
    <property type="match status" value="1"/>
</dbReference>
<dbReference type="NCBIfam" id="NF003745">
    <property type="entry name" value="PRK05342.1"/>
    <property type="match status" value="1"/>
</dbReference>
<dbReference type="PANTHER" id="PTHR48102:SF7">
    <property type="entry name" value="ATP-DEPENDENT CLP PROTEASE ATP-BINDING SUBUNIT CLPX-LIKE, MITOCHONDRIAL"/>
    <property type="match status" value="1"/>
</dbReference>
<dbReference type="PANTHER" id="PTHR48102">
    <property type="entry name" value="ATP-DEPENDENT CLP PROTEASE ATP-BINDING SUBUNIT CLPX-LIKE, MITOCHONDRIAL-RELATED"/>
    <property type="match status" value="1"/>
</dbReference>
<dbReference type="Pfam" id="PF07724">
    <property type="entry name" value="AAA_2"/>
    <property type="match status" value="1"/>
</dbReference>
<dbReference type="Pfam" id="PF10431">
    <property type="entry name" value="ClpB_D2-small"/>
    <property type="match status" value="1"/>
</dbReference>
<dbReference type="Pfam" id="PF06689">
    <property type="entry name" value="zf-C4_ClpX"/>
    <property type="match status" value="1"/>
</dbReference>
<dbReference type="SMART" id="SM00382">
    <property type="entry name" value="AAA"/>
    <property type="match status" value="1"/>
</dbReference>
<dbReference type="SMART" id="SM01086">
    <property type="entry name" value="ClpB_D2-small"/>
    <property type="match status" value="1"/>
</dbReference>
<dbReference type="SMART" id="SM00994">
    <property type="entry name" value="zf-C4_ClpX"/>
    <property type="match status" value="1"/>
</dbReference>
<dbReference type="SUPFAM" id="SSF57716">
    <property type="entry name" value="Glucocorticoid receptor-like (DNA-binding domain)"/>
    <property type="match status" value="1"/>
</dbReference>
<dbReference type="SUPFAM" id="SSF52540">
    <property type="entry name" value="P-loop containing nucleoside triphosphate hydrolases"/>
    <property type="match status" value="1"/>
</dbReference>
<dbReference type="PROSITE" id="PS51902">
    <property type="entry name" value="CLPX_ZB"/>
    <property type="match status" value="1"/>
</dbReference>
<sequence length="422" mass="46569">MTDKKAGGEKLLYCSFCGKSQHEVRKLIAGPSVFICDECIELCNDIIRDEIAETVDAEGTRTTLPTPQEICEILNQYVIGQTQAKRNLSVAVYNHYKRLRHLSGRKEEVELSKSNILLIGPTGSGKTLLAQTLARLLNVPFVMADATTLTEAGYVGEDVENIIQKLLQKCDYDVDKAQHGIVYIDEIDKISRKSDNPSITRDVSGEGVQQALLKLIEGTVASIPPQGGRKHPNQDFIQIDTTNILFICGGAFDGLEKVIRNRTEKIGIGFGAEIKSREGKNVSESFRQVEPEDLIKFGLIPEFVGRLPVVATLQELDEEALIQILVEPKNALVKQYQKLFSMEGVDLEIRPAALHAVARKAIRRKTGARGLRSILESALLDIMYDLPTLEGVEKVVVDEGTIEEGAQPLLMYAEQPKVSGSN</sequence>
<accession>Q5P160</accession>
<reference key="1">
    <citation type="journal article" date="2005" name="Arch. Microbiol.">
        <title>The genome sequence of an anaerobic aromatic-degrading denitrifying bacterium, strain EbN1.</title>
        <authorList>
            <person name="Rabus R."/>
            <person name="Kube M."/>
            <person name="Heider J."/>
            <person name="Beck A."/>
            <person name="Heitmann K."/>
            <person name="Widdel F."/>
            <person name="Reinhardt R."/>
        </authorList>
    </citation>
    <scope>NUCLEOTIDE SEQUENCE [LARGE SCALE GENOMIC DNA]</scope>
    <source>
        <strain>DSM 19018 / LMG 30748 / EbN1</strain>
    </source>
</reference>
<gene>
    <name evidence="1" type="primary">clpX</name>
    <name type="ordered locus">AZOSEA28290</name>
    <name type="ORF">ebA4971</name>
</gene>
<name>CLPX_AROAE</name>
<feature type="chain" id="PRO_0000160303" description="ATP-dependent Clp protease ATP-binding subunit ClpX">
    <location>
        <begin position="1"/>
        <end position="422"/>
    </location>
</feature>
<feature type="domain" description="ClpX-type ZB" evidence="2">
    <location>
        <begin position="2"/>
        <end position="55"/>
    </location>
</feature>
<feature type="binding site" evidence="2">
    <location>
        <position position="14"/>
    </location>
    <ligand>
        <name>Zn(2+)</name>
        <dbReference type="ChEBI" id="CHEBI:29105"/>
    </ligand>
</feature>
<feature type="binding site" evidence="2">
    <location>
        <position position="17"/>
    </location>
    <ligand>
        <name>Zn(2+)</name>
        <dbReference type="ChEBI" id="CHEBI:29105"/>
    </ligand>
</feature>
<feature type="binding site" evidence="2">
    <location>
        <position position="36"/>
    </location>
    <ligand>
        <name>Zn(2+)</name>
        <dbReference type="ChEBI" id="CHEBI:29105"/>
    </ligand>
</feature>
<feature type="binding site" evidence="2">
    <location>
        <position position="39"/>
    </location>
    <ligand>
        <name>Zn(2+)</name>
        <dbReference type="ChEBI" id="CHEBI:29105"/>
    </ligand>
</feature>
<feature type="binding site" evidence="1">
    <location>
        <begin position="121"/>
        <end position="128"/>
    </location>
    <ligand>
        <name>ATP</name>
        <dbReference type="ChEBI" id="CHEBI:30616"/>
    </ligand>
</feature>
<keyword id="KW-0067">ATP-binding</keyword>
<keyword id="KW-0143">Chaperone</keyword>
<keyword id="KW-0479">Metal-binding</keyword>
<keyword id="KW-0547">Nucleotide-binding</keyword>
<keyword id="KW-1185">Reference proteome</keyword>
<keyword id="KW-0862">Zinc</keyword>
<proteinExistence type="inferred from homology"/>
<comment type="function">
    <text evidence="1">ATP-dependent specificity component of the Clp protease. It directs the protease to specific substrates. Can perform chaperone functions in the absence of ClpP.</text>
</comment>
<comment type="subunit">
    <text evidence="1">Component of the ClpX-ClpP complex. Forms a hexameric ring that, in the presence of ATP, binds to fourteen ClpP subunits assembled into a disk-like structure with a central cavity, resembling the structure of eukaryotic proteasomes.</text>
</comment>
<comment type="similarity">
    <text evidence="1">Belongs to the ClpX chaperone family.</text>
</comment>